<evidence type="ECO:0000255" key="1">
    <source>
        <dbReference type="HAMAP-Rule" id="MF_00503"/>
    </source>
</evidence>
<evidence type="ECO:0000305" key="2"/>
<reference key="1">
    <citation type="journal article" date="2005" name="Science">
        <title>Genome streamlining in a cosmopolitan oceanic bacterium.</title>
        <authorList>
            <person name="Giovannoni S.J."/>
            <person name="Tripp H.J."/>
            <person name="Givan S."/>
            <person name="Podar M."/>
            <person name="Vergin K.L."/>
            <person name="Baptista D."/>
            <person name="Bibbs L."/>
            <person name="Eads J."/>
            <person name="Richardson T.H."/>
            <person name="Noordewier M."/>
            <person name="Rappe M.S."/>
            <person name="Short J.M."/>
            <person name="Carrington J.C."/>
            <person name="Mathur E.J."/>
        </authorList>
    </citation>
    <scope>NUCLEOTIDE SEQUENCE [LARGE SCALE GENOMIC DNA]</scope>
    <source>
        <strain>HTCC1062</strain>
    </source>
</reference>
<name>RL9_PELUB</name>
<organism>
    <name type="scientific">Pelagibacter ubique (strain HTCC1062)</name>
    <dbReference type="NCBI Taxonomy" id="335992"/>
    <lineage>
        <taxon>Bacteria</taxon>
        <taxon>Pseudomonadati</taxon>
        <taxon>Pseudomonadota</taxon>
        <taxon>Alphaproteobacteria</taxon>
        <taxon>Candidatus Pelagibacterales</taxon>
        <taxon>Candidatus Pelagibacteraceae</taxon>
        <taxon>Candidatus Pelagibacter</taxon>
    </lineage>
</organism>
<comment type="function">
    <text evidence="1">Binds to the 23S rRNA.</text>
</comment>
<comment type="similarity">
    <text evidence="1">Belongs to the bacterial ribosomal protein bL9 family.</text>
</comment>
<accession>Q4FMR7</accession>
<protein>
    <recommendedName>
        <fullName evidence="1">Large ribosomal subunit protein bL9</fullName>
    </recommendedName>
    <alternativeName>
        <fullName evidence="2">50S ribosomal protein L9</fullName>
    </alternativeName>
</protein>
<dbReference type="EMBL" id="CP000084">
    <property type="protein sequence ID" value="AAZ21522.1"/>
    <property type="molecule type" value="Genomic_DNA"/>
</dbReference>
<dbReference type="RefSeq" id="WP_006997210.1">
    <property type="nucleotide sequence ID" value="NC_007205.1"/>
</dbReference>
<dbReference type="SMR" id="Q4FMR7"/>
<dbReference type="STRING" id="335992.SAR11_0703"/>
<dbReference type="GeneID" id="66295206"/>
<dbReference type="KEGG" id="pub:SAR11_0703"/>
<dbReference type="eggNOG" id="COG0359">
    <property type="taxonomic scope" value="Bacteria"/>
</dbReference>
<dbReference type="HOGENOM" id="CLU_078938_3_0_5"/>
<dbReference type="OrthoDB" id="9788336at2"/>
<dbReference type="Proteomes" id="UP000002528">
    <property type="component" value="Chromosome"/>
</dbReference>
<dbReference type="GO" id="GO:1990904">
    <property type="term" value="C:ribonucleoprotein complex"/>
    <property type="evidence" value="ECO:0007669"/>
    <property type="project" value="UniProtKB-KW"/>
</dbReference>
<dbReference type="GO" id="GO:0005840">
    <property type="term" value="C:ribosome"/>
    <property type="evidence" value="ECO:0007669"/>
    <property type="project" value="UniProtKB-KW"/>
</dbReference>
<dbReference type="GO" id="GO:0019843">
    <property type="term" value="F:rRNA binding"/>
    <property type="evidence" value="ECO:0007669"/>
    <property type="project" value="UniProtKB-UniRule"/>
</dbReference>
<dbReference type="GO" id="GO:0003735">
    <property type="term" value="F:structural constituent of ribosome"/>
    <property type="evidence" value="ECO:0007669"/>
    <property type="project" value="InterPro"/>
</dbReference>
<dbReference type="GO" id="GO:0006412">
    <property type="term" value="P:translation"/>
    <property type="evidence" value="ECO:0007669"/>
    <property type="project" value="UniProtKB-UniRule"/>
</dbReference>
<dbReference type="Gene3D" id="3.10.430.100">
    <property type="entry name" value="Ribosomal protein L9, C-terminal domain"/>
    <property type="match status" value="1"/>
</dbReference>
<dbReference type="Gene3D" id="3.40.5.10">
    <property type="entry name" value="Ribosomal protein L9, N-terminal domain"/>
    <property type="match status" value="1"/>
</dbReference>
<dbReference type="HAMAP" id="MF_00503">
    <property type="entry name" value="Ribosomal_bL9"/>
    <property type="match status" value="1"/>
</dbReference>
<dbReference type="InterPro" id="IPR000244">
    <property type="entry name" value="Ribosomal_bL9"/>
</dbReference>
<dbReference type="InterPro" id="IPR009027">
    <property type="entry name" value="Ribosomal_bL9/RNase_H1_N"/>
</dbReference>
<dbReference type="InterPro" id="IPR020594">
    <property type="entry name" value="Ribosomal_bL9_bac/chp"/>
</dbReference>
<dbReference type="InterPro" id="IPR020069">
    <property type="entry name" value="Ribosomal_bL9_C"/>
</dbReference>
<dbReference type="InterPro" id="IPR036791">
    <property type="entry name" value="Ribosomal_bL9_C_sf"/>
</dbReference>
<dbReference type="InterPro" id="IPR020070">
    <property type="entry name" value="Ribosomal_bL9_N"/>
</dbReference>
<dbReference type="InterPro" id="IPR036935">
    <property type="entry name" value="Ribosomal_bL9_N_sf"/>
</dbReference>
<dbReference type="NCBIfam" id="TIGR00158">
    <property type="entry name" value="L9"/>
    <property type="match status" value="1"/>
</dbReference>
<dbReference type="PANTHER" id="PTHR21368">
    <property type="entry name" value="50S RIBOSOMAL PROTEIN L9"/>
    <property type="match status" value="1"/>
</dbReference>
<dbReference type="Pfam" id="PF03948">
    <property type="entry name" value="Ribosomal_L9_C"/>
    <property type="match status" value="1"/>
</dbReference>
<dbReference type="Pfam" id="PF01281">
    <property type="entry name" value="Ribosomal_L9_N"/>
    <property type="match status" value="1"/>
</dbReference>
<dbReference type="SUPFAM" id="SSF55658">
    <property type="entry name" value="L9 N-domain-like"/>
    <property type="match status" value="1"/>
</dbReference>
<dbReference type="SUPFAM" id="SSF55653">
    <property type="entry name" value="Ribosomal protein L9 C-domain"/>
    <property type="match status" value="1"/>
</dbReference>
<dbReference type="PROSITE" id="PS00651">
    <property type="entry name" value="RIBOSOMAL_L9"/>
    <property type="match status" value="1"/>
</dbReference>
<proteinExistence type="inferred from homology"/>
<feature type="chain" id="PRO_0000236558" description="Large ribosomal subunit protein bL9">
    <location>
        <begin position="1"/>
        <end position="152"/>
    </location>
</feature>
<keyword id="KW-1185">Reference proteome</keyword>
<keyword id="KW-0687">Ribonucleoprotein</keyword>
<keyword id="KW-0689">Ribosomal protein</keyword>
<keyword id="KW-0694">RNA-binding</keyword>
<keyword id="KW-0699">rRNA-binding</keyword>
<sequence>MKVILLENLRRIGSIGEIIDVKRGFARNFLISNKKALYASKENIAEVEKIKSELSKKDTEKKKEAQKISEQINNKEYEIKKLSTENKELYGSVKPTEISKLILENDKLDIKPSMIQPITEIKSIGKFKVKIILHSEVDSEITINVVTADTIQ</sequence>
<gene>
    <name evidence="1" type="primary">rplI</name>
    <name type="ordered locus">SAR11_0703</name>
</gene>